<evidence type="ECO:0000255" key="1">
    <source>
        <dbReference type="HAMAP-Rule" id="MF_00258"/>
    </source>
</evidence>
<accession>Q5F6P9</accession>
<proteinExistence type="inferred from homology"/>
<feature type="chain" id="PRO_1000047589" description="Glutamate racemase">
    <location>
        <begin position="1"/>
        <end position="270"/>
    </location>
</feature>
<feature type="active site" description="Proton donor/acceptor" evidence="1">
    <location>
        <position position="77"/>
    </location>
</feature>
<feature type="active site" description="Proton donor/acceptor" evidence="1">
    <location>
        <position position="189"/>
    </location>
</feature>
<feature type="binding site" evidence="1">
    <location>
        <begin position="14"/>
        <end position="15"/>
    </location>
    <ligand>
        <name>substrate</name>
    </ligand>
</feature>
<feature type="binding site" evidence="1">
    <location>
        <begin position="46"/>
        <end position="47"/>
    </location>
    <ligand>
        <name>substrate</name>
    </ligand>
</feature>
<feature type="binding site" evidence="1">
    <location>
        <begin position="78"/>
        <end position="79"/>
    </location>
    <ligand>
        <name>substrate</name>
    </ligand>
</feature>
<feature type="binding site" evidence="1">
    <location>
        <begin position="190"/>
        <end position="191"/>
    </location>
    <ligand>
        <name>substrate</name>
    </ligand>
</feature>
<organism>
    <name type="scientific">Neisseria gonorrhoeae (strain ATCC 700825 / FA 1090)</name>
    <dbReference type="NCBI Taxonomy" id="242231"/>
    <lineage>
        <taxon>Bacteria</taxon>
        <taxon>Pseudomonadati</taxon>
        <taxon>Pseudomonadota</taxon>
        <taxon>Betaproteobacteria</taxon>
        <taxon>Neisseriales</taxon>
        <taxon>Neisseriaceae</taxon>
        <taxon>Neisseria</taxon>
    </lineage>
</organism>
<reference key="1">
    <citation type="submission" date="2003-03" db="EMBL/GenBank/DDBJ databases">
        <title>The complete genome sequence of Neisseria gonorrhoeae.</title>
        <authorList>
            <person name="Lewis L.A."/>
            <person name="Gillaspy A.F."/>
            <person name="McLaughlin R.E."/>
            <person name="Gipson M."/>
            <person name="Ducey T.F."/>
            <person name="Ownbey T."/>
            <person name="Hartman K."/>
            <person name="Nydick C."/>
            <person name="Carson M.B."/>
            <person name="Vaughn J."/>
            <person name="Thomson C."/>
            <person name="Song L."/>
            <person name="Lin S."/>
            <person name="Yuan X."/>
            <person name="Najar F."/>
            <person name="Zhan M."/>
            <person name="Ren Q."/>
            <person name="Zhu H."/>
            <person name="Qi S."/>
            <person name="Kenton S.M."/>
            <person name="Lai H."/>
            <person name="White J.D."/>
            <person name="Clifton S."/>
            <person name="Roe B.A."/>
            <person name="Dyer D.W."/>
        </authorList>
    </citation>
    <scope>NUCLEOTIDE SEQUENCE [LARGE SCALE GENOMIC DNA]</scope>
    <source>
        <strain>ATCC 700825 / FA 1090</strain>
    </source>
</reference>
<dbReference type="EC" id="5.1.1.3" evidence="1"/>
<dbReference type="EMBL" id="AE004969">
    <property type="protein sequence ID" value="AAW90138.1"/>
    <property type="molecule type" value="Genomic_DNA"/>
</dbReference>
<dbReference type="RefSeq" id="WP_003689383.1">
    <property type="nucleotide sequence ID" value="NC_002946.2"/>
</dbReference>
<dbReference type="RefSeq" id="YP_208550.1">
    <property type="nucleotide sequence ID" value="NC_002946.2"/>
</dbReference>
<dbReference type="SMR" id="Q5F6P9"/>
<dbReference type="STRING" id="242231.NGO_1500"/>
<dbReference type="GeneID" id="66753700"/>
<dbReference type="KEGG" id="ngo:NGO_1500"/>
<dbReference type="PATRIC" id="fig|242231.10.peg.1785"/>
<dbReference type="HOGENOM" id="CLU_052344_0_2_4"/>
<dbReference type="UniPathway" id="UPA00219"/>
<dbReference type="Proteomes" id="UP000000535">
    <property type="component" value="Chromosome"/>
</dbReference>
<dbReference type="GO" id="GO:0008881">
    <property type="term" value="F:glutamate racemase activity"/>
    <property type="evidence" value="ECO:0007669"/>
    <property type="project" value="UniProtKB-UniRule"/>
</dbReference>
<dbReference type="GO" id="GO:0071555">
    <property type="term" value="P:cell wall organization"/>
    <property type="evidence" value="ECO:0007669"/>
    <property type="project" value="UniProtKB-KW"/>
</dbReference>
<dbReference type="GO" id="GO:0009252">
    <property type="term" value="P:peptidoglycan biosynthetic process"/>
    <property type="evidence" value="ECO:0007669"/>
    <property type="project" value="UniProtKB-UniRule"/>
</dbReference>
<dbReference type="GO" id="GO:0008360">
    <property type="term" value="P:regulation of cell shape"/>
    <property type="evidence" value="ECO:0007669"/>
    <property type="project" value="UniProtKB-KW"/>
</dbReference>
<dbReference type="FunFam" id="3.40.50.1860:FF:000002">
    <property type="entry name" value="Glutamate racemase"/>
    <property type="match status" value="1"/>
</dbReference>
<dbReference type="Gene3D" id="3.40.50.1860">
    <property type="match status" value="2"/>
</dbReference>
<dbReference type="HAMAP" id="MF_00258">
    <property type="entry name" value="Glu_racemase"/>
    <property type="match status" value="1"/>
</dbReference>
<dbReference type="InterPro" id="IPR015942">
    <property type="entry name" value="Asp/Glu/hydantoin_racemase"/>
</dbReference>
<dbReference type="InterPro" id="IPR001920">
    <property type="entry name" value="Asp/Glu_race"/>
</dbReference>
<dbReference type="InterPro" id="IPR033134">
    <property type="entry name" value="Asp/Glu_racemase_AS_2"/>
</dbReference>
<dbReference type="InterPro" id="IPR004391">
    <property type="entry name" value="Glu_race"/>
</dbReference>
<dbReference type="NCBIfam" id="TIGR00067">
    <property type="entry name" value="glut_race"/>
    <property type="match status" value="1"/>
</dbReference>
<dbReference type="PANTHER" id="PTHR21198">
    <property type="entry name" value="GLUTAMATE RACEMASE"/>
    <property type="match status" value="1"/>
</dbReference>
<dbReference type="PANTHER" id="PTHR21198:SF2">
    <property type="entry name" value="GLUTAMATE RACEMASE"/>
    <property type="match status" value="1"/>
</dbReference>
<dbReference type="Pfam" id="PF01177">
    <property type="entry name" value="Asp_Glu_race"/>
    <property type="match status" value="1"/>
</dbReference>
<dbReference type="SUPFAM" id="SSF53681">
    <property type="entry name" value="Aspartate/glutamate racemase"/>
    <property type="match status" value="2"/>
</dbReference>
<dbReference type="PROSITE" id="PS00924">
    <property type="entry name" value="ASP_GLU_RACEMASE_2"/>
    <property type="match status" value="1"/>
</dbReference>
<keyword id="KW-0133">Cell shape</keyword>
<keyword id="KW-0961">Cell wall biogenesis/degradation</keyword>
<keyword id="KW-0413">Isomerase</keyword>
<keyword id="KW-0573">Peptidoglycan synthesis</keyword>
<keyword id="KW-1185">Reference proteome</keyword>
<gene>
    <name evidence="1" type="primary">murI</name>
    <name type="ordered locus">NGO_1500</name>
</gene>
<protein>
    <recommendedName>
        <fullName evidence="1">Glutamate racemase</fullName>
        <ecNumber evidence="1">5.1.1.3</ecNumber>
    </recommendedName>
</protein>
<name>MURI_NEIG1</name>
<sequence>MENIGRQRPIGVFDSGIGGLTNVRALMERLPMENIIYFGDTARVPYGTKSKATIENFSMQIVDFLLGHDVKAMVIACNTIAAVAGRKIRQKTGNMPVLDVISAGAKAALATTRNNKIGIIATNTTVNSNAYARAIHRDNPDTLVRTQAAPLLVPLVEEGWLEHEVTRLTVCEYLKPLLADGIDTLVLGCTHFPLLKPLIGREAHNVALVDSAITTAEETARVLAQEGLLDTGNNNPDYRFYVSDIPLKFRTIGERFLGRTMEQIEMVSLG</sequence>
<comment type="function">
    <text evidence="1">Provides the (R)-glutamate required for cell wall biosynthesis.</text>
</comment>
<comment type="catalytic activity">
    <reaction evidence="1">
        <text>L-glutamate = D-glutamate</text>
        <dbReference type="Rhea" id="RHEA:12813"/>
        <dbReference type="ChEBI" id="CHEBI:29985"/>
        <dbReference type="ChEBI" id="CHEBI:29986"/>
        <dbReference type="EC" id="5.1.1.3"/>
    </reaction>
</comment>
<comment type="pathway">
    <text evidence="1">Cell wall biogenesis; peptidoglycan biosynthesis.</text>
</comment>
<comment type="similarity">
    <text evidence="1">Belongs to the aspartate/glutamate racemases family.</text>
</comment>